<dbReference type="EC" id="1.-.-.-" evidence="3"/>
<dbReference type="EMBL" id="LC027937">
    <property type="protein sequence ID" value="BAU61565.1"/>
    <property type="molecule type" value="Genomic_DNA"/>
</dbReference>
<dbReference type="SMR" id="A0A140JWT8"/>
<dbReference type="GO" id="GO:0016020">
    <property type="term" value="C:membrane"/>
    <property type="evidence" value="ECO:0007669"/>
    <property type="project" value="UniProtKB-SubCell"/>
</dbReference>
<dbReference type="GO" id="GO:0020037">
    <property type="term" value="F:heme binding"/>
    <property type="evidence" value="ECO:0007669"/>
    <property type="project" value="InterPro"/>
</dbReference>
<dbReference type="GO" id="GO:0005506">
    <property type="term" value="F:iron ion binding"/>
    <property type="evidence" value="ECO:0007669"/>
    <property type="project" value="InterPro"/>
</dbReference>
<dbReference type="GO" id="GO:0004497">
    <property type="term" value="F:monooxygenase activity"/>
    <property type="evidence" value="ECO:0007669"/>
    <property type="project" value="UniProtKB-KW"/>
</dbReference>
<dbReference type="GO" id="GO:0016705">
    <property type="term" value="F:oxidoreductase activity, acting on paired donors, with incorporation or reduction of molecular oxygen"/>
    <property type="evidence" value="ECO:0007669"/>
    <property type="project" value="InterPro"/>
</dbReference>
<dbReference type="GO" id="GO:0043386">
    <property type="term" value="P:mycotoxin biosynthetic process"/>
    <property type="evidence" value="ECO:0007669"/>
    <property type="project" value="UniProtKB-ARBA"/>
</dbReference>
<dbReference type="Gene3D" id="1.10.630.10">
    <property type="entry name" value="Cytochrome P450"/>
    <property type="match status" value="1"/>
</dbReference>
<dbReference type="InterPro" id="IPR001128">
    <property type="entry name" value="Cyt_P450"/>
</dbReference>
<dbReference type="InterPro" id="IPR002401">
    <property type="entry name" value="Cyt_P450_E_grp-I"/>
</dbReference>
<dbReference type="InterPro" id="IPR036396">
    <property type="entry name" value="Cyt_P450_sf"/>
</dbReference>
<dbReference type="InterPro" id="IPR050121">
    <property type="entry name" value="Cytochrome_P450_monoxygenase"/>
</dbReference>
<dbReference type="PANTHER" id="PTHR24305">
    <property type="entry name" value="CYTOCHROME P450"/>
    <property type="match status" value="1"/>
</dbReference>
<dbReference type="PANTHER" id="PTHR24305:SF107">
    <property type="entry name" value="P450, PUTATIVE (EUROFUNG)-RELATED"/>
    <property type="match status" value="1"/>
</dbReference>
<dbReference type="Pfam" id="PF00067">
    <property type="entry name" value="p450"/>
    <property type="match status" value="1"/>
</dbReference>
<dbReference type="PRINTS" id="PR00463">
    <property type="entry name" value="EP450I"/>
</dbReference>
<dbReference type="PRINTS" id="PR00385">
    <property type="entry name" value="P450"/>
</dbReference>
<dbReference type="SUPFAM" id="SSF48264">
    <property type="entry name" value="Cytochrome P450"/>
    <property type="match status" value="1"/>
</dbReference>
<accession>A0A140JWT8</accession>
<feature type="chain" id="PRO_0000446577" description="Cytochrome P450 monooxygenase ptmJ">
    <location>
        <begin position="1"/>
        <end position="515"/>
    </location>
</feature>
<feature type="transmembrane region" description="Helical" evidence="2">
    <location>
        <begin position="6"/>
        <end position="26"/>
    </location>
</feature>
<feature type="transmembrane region" description="Helical" evidence="2">
    <location>
        <begin position="50"/>
        <end position="70"/>
    </location>
</feature>
<feature type="transmembrane region" description="Helical" evidence="2">
    <location>
        <begin position="82"/>
        <end position="102"/>
    </location>
</feature>
<feature type="transmembrane region" description="Helical" evidence="2">
    <location>
        <begin position="300"/>
        <end position="320"/>
    </location>
</feature>
<feature type="binding site" description="axial binding residue" evidence="1">
    <location>
        <position position="449"/>
    </location>
    <ligand>
        <name>heme</name>
        <dbReference type="ChEBI" id="CHEBI:30413"/>
    </ligand>
    <ligandPart>
        <name>Fe</name>
        <dbReference type="ChEBI" id="CHEBI:18248"/>
    </ligandPart>
</feature>
<comment type="function">
    <text evidence="3">Cytochrome P450 monooxygenase; part of the gene cluster that mediates the biosynthesis of the indole diterpenes penitrems (PubMed:25831977). The geranylgeranyl diphosphate (GGPP) synthase ptmG catalyzes the first step in penitrem biosynthesis via conversion of farnesyl pyrophosphate and isopentyl pyrophosphate into geranylgeranyl pyrophosphate (GGPP) (PubMed:25831977). Condensation of indole-3-glycerol phosphate with GGPP by the prenyl transferase ptmC then forms 3-geranylgeranylindole (3-GGI) (PubMed:25831977). Epoxidation by the FAD-dependent monooxygenase ptmM leads to a epoxidized-GGI that is substrate of the terpene cyclase ptmB for cyclization to yield paspaline (PubMed:25831977). Paspaline is subsequently converted to 13-desoxypaxilline by the cytochrome P450 monooxygenase ptmP, the latter being then converted to paxilline by the cytochrome P450 monooxygenase ptmQ (PubMed:25831977). Paxilline is converted to beta-paxitriol via C-10 ketoreduction by the short-chain dehydrogenase ptmH which can be monoprenylated at the C-20 by the indole diterpene prenyltransferase ptmD (PubMed:25831977). A two-step elimination (acetylation and elimination) process performed by the O-acetyltransferase ptmV and ptmI leads to the production of the prenylated form of penijanthine (PubMed:25831977). The FAD-linked oxidoreductase ptmO then converts the prenylated form of penijanthine into PC-M5 which is in turn transformed into PC-M4 by the aromatic dimethylallyltransferase ptmE (PubMed:25831977). Five sequential oxidative transformations performed by the cytochrome P450 monooxygenases ptmK, ptmU, ptmL, ptmN and ptmJ yield the various penitrem compounds. PtmK, ptmU and ptmM are involved in the formation of the key bicyclic ring of penitrem C via the formation of the intermediates secopenitrem D and penitrem D. PtmL catalyzes the epoxidation of penitrem D and C to yield penitrem B and F, respectively. PtmJ catalyzes the last benzylic hydroxylation to convert penitrem B to prenitrem E and penitrem F to penitrem A (PubMed:25831977).</text>
</comment>
<comment type="cofactor">
    <cofactor evidence="1">
        <name>heme</name>
        <dbReference type="ChEBI" id="CHEBI:30413"/>
    </cofactor>
</comment>
<comment type="pathway">
    <text evidence="3">Secondary metabolite biosynthesis.</text>
</comment>
<comment type="subcellular location">
    <subcellularLocation>
        <location evidence="2">Membrane</location>
        <topology evidence="2">Multi-pass membrane protein</topology>
    </subcellularLocation>
</comment>
<comment type="similarity">
    <text evidence="5">Belongs to the cytochrome P450 family.</text>
</comment>
<reference key="1">
    <citation type="journal article" date="2015" name="Angew. Chem. Int. Ed.">
        <title>Reconstitution of biosynthetic machinery for the synthesis of the highly elaborated indole diterpene penitrem.</title>
        <authorList>
            <person name="Liu C."/>
            <person name="Tagami K."/>
            <person name="Minami A."/>
            <person name="Matsumoto T."/>
            <person name="Frisvad J.C."/>
            <person name="Suzuki H."/>
            <person name="Ishikawa J."/>
            <person name="Gomi K."/>
            <person name="Oikawa H."/>
        </authorList>
    </citation>
    <scope>NUCLEOTIDE SEQUENCE [GENOMIC DNA]</scope>
    <scope>IDENTIFICATION</scope>
    <scope>FUNCTION</scope>
    <scope>PATHWAY</scope>
    <source>
        <strain>ATCC 90288 / AK-40</strain>
    </source>
</reference>
<evidence type="ECO:0000250" key="1">
    <source>
        <dbReference type="UniProtKB" id="P04798"/>
    </source>
</evidence>
<evidence type="ECO:0000255" key="2"/>
<evidence type="ECO:0000269" key="3">
    <source>
    </source>
</evidence>
<evidence type="ECO:0000303" key="4">
    <source>
    </source>
</evidence>
<evidence type="ECO:0000305" key="5"/>
<gene>
    <name evidence="4" type="primary">ptmJ</name>
</gene>
<sequence>MMRDSLGPFRTFTLLTVGLLLSLFVIKTVKHRRRYHGLPTPPHNMLLGNLGVVLAEILASPEGFFHLFCVENIRRKYNMPSVFYLDLWPILPSIMVVAEPVVAKHMTQVQPLQRERFSPNLFSPLLTAEFILAMEQKNWKKENPALNAALTSTRVNEATSLLFPSLHSLRSRLHSISQSGKQYPIKDLLISYIIEVGGVIQLGGSFDLLAETSALDPIIKQSLDMMGWNPVKRYICSKEIKQRTDCLNRVLVATVQNTVQTGESGMMSQSPIYLAHVEQLASGRMDHAESIAYLVNTMKVIILASVVTAGAASYCYLFLHKYPDCLREMREEHDRVFSPDRTQTWELLQKEPHRINSLHFTLAVVKETLRLIGVGGVFKKLKTEEFLETEGNVYPVVCNVAFICHLAMGRRADLFPDPDAFRPHRFLPGANPPIPADSFRPFEKGQLSCPGQTLALKSLVLLLLTTSREFDLVPVFPKGAPRAAEYLGGEGYPEFHIGPHVNKGMPVMVHTRVDA</sequence>
<protein>
    <recommendedName>
        <fullName evidence="4">Cytochrome P450 monooxygenase ptmJ</fullName>
        <ecNumber evidence="3">1.-.-.-</ecNumber>
    </recommendedName>
    <alternativeName>
        <fullName evidence="4">Penitrem biosynthesis cluster 2 protein J</fullName>
    </alternativeName>
</protein>
<name>PTMJ_PENOH</name>
<keyword id="KW-0349">Heme</keyword>
<keyword id="KW-0408">Iron</keyword>
<keyword id="KW-0472">Membrane</keyword>
<keyword id="KW-0479">Metal-binding</keyword>
<keyword id="KW-0503">Monooxygenase</keyword>
<keyword id="KW-0560">Oxidoreductase</keyword>
<keyword id="KW-0812">Transmembrane</keyword>
<keyword id="KW-1133">Transmembrane helix</keyword>
<proteinExistence type="inferred from homology"/>
<organism>
    <name type="scientific">Penicillium ochrochloron</name>
    <dbReference type="NCBI Taxonomy" id="69780"/>
    <lineage>
        <taxon>Eukaryota</taxon>
        <taxon>Fungi</taxon>
        <taxon>Dikarya</taxon>
        <taxon>Ascomycota</taxon>
        <taxon>Pezizomycotina</taxon>
        <taxon>Eurotiomycetes</taxon>
        <taxon>Eurotiomycetidae</taxon>
        <taxon>Eurotiales</taxon>
        <taxon>Aspergillaceae</taxon>
        <taxon>Penicillium</taxon>
    </lineage>
</organism>